<accession>B0URV9</accession>
<comment type="function">
    <text evidence="1">Phosphorylation of dTMP to form dTDP in both de novo and salvage pathways of dTTP synthesis.</text>
</comment>
<comment type="catalytic activity">
    <reaction evidence="1">
        <text>dTMP + ATP = dTDP + ADP</text>
        <dbReference type="Rhea" id="RHEA:13517"/>
        <dbReference type="ChEBI" id="CHEBI:30616"/>
        <dbReference type="ChEBI" id="CHEBI:58369"/>
        <dbReference type="ChEBI" id="CHEBI:63528"/>
        <dbReference type="ChEBI" id="CHEBI:456216"/>
        <dbReference type="EC" id="2.7.4.9"/>
    </reaction>
</comment>
<comment type="similarity">
    <text evidence="1">Belongs to the thymidylate kinase family.</text>
</comment>
<organism>
    <name type="scientific">Histophilus somni (strain 2336)</name>
    <name type="common">Haemophilus somnus</name>
    <dbReference type="NCBI Taxonomy" id="228400"/>
    <lineage>
        <taxon>Bacteria</taxon>
        <taxon>Pseudomonadati</taxon>
        <taxon>Pseudomonadota</taxon>
        <taxon>Gammaproteobacteria</taxon>
        <taxon>Pasteurellales</taxon>
        <taxon>Pasteurellaceae</taxon>
        <taxon>Histophilus</taxon>
    </lineage>
</organism>
<protein>
    <recommendedName>
        <fullName evidence="1">Thymidylate kinase</fullName>
        <ecNumber evidence="1">2.7.4.9</ecNumber>
    </recommendedName>
    <alternativeName>
        <fullName evidence="1">dTMP kinase</fullName>
    </alternativeName>
</protein>
<sequence length="210" mass="23611">MKTGKFIVIEGLEGAGKSSTHQVVVNTLTEFGIHEVVFTREPGGTPLAEKLRYLIKHEAEELVTAKAELLMLYAARVQLVENVIKPALARGKWVVGDRHDLSSQAYQGGGRGLDRHLMTTLKNAVLGDFKPDFTLYLDIEPEIGLARAKGRGELDRIEQQNLDFFHRTRERYLQLVQQDPNAVLINAGQPIELVQQDIRKAVQKFIEENV</sequence>
<keyword id="KW-0067">ATP-binding</keyword>
<keyword id="KW-0418">Kinase</keyword>
<keyword id="KW-0545">Nucleotide biosynthesis</keyword>
<keyword id="KW-0547">Nucleotide-binding</keyword>
<keyword id="KW-0808">Transferase</keyword>
<reference key="1">
    <citation type="submission" date="2008-02" db="EMBL/GenBank/DDBJ databases">
        <title>Complete sequence of Haemophilus somnus 2336.</title>
        <authorList>
            <consortium name="US DOE Joint Genome Institute"/>
            <person name="Siddaramappa S."/>
            <person name="Duncan A.J."/>
            <person name="Challacombe J.F."/>
            <person name="Rainey D."/>
            <person name="Gillaspy A.F."/>
            <person name="Carson M."/>
            <person name="Gipson J."/>
            <person name="Gipson M."/>
            <person name="Bruce D."/>
            <person name="Detter J.C."/>
            <person name="Han C.S."/>
            <person name="Land M."/>
            <person name="Tapia R."/>
            <person name="Thompson L.S."/>
            <person name="Orvis J."/>
            <person name="Zaitshik J."/>
            <person name="Barnes G."/>
            <person name="Brettin T.S."/>
            <person name="Dyer D.W."/>
            <person name="Inzana T.J."/>
        </authorList>
    </citation>
    <scope>NUCLEOTIDE SEQUENCE [LARGE SCALE GENOMIC DNA]</scope>
    <source>
        <strain>2336</strain>
    </source>
</reference>
<feature type="chain" id="PRO_1000076965" description="Thymidylate kinase">
    <location>
        <begin position="1"/>
        <end position="210"/>
    </location>
</feature>
<feature type="binding site" evidence="1">
    <location>
        <begin position="11"/>
        <end position="18"/>
    </location>
    <ligand>
        <name>ATP</name>
        <dbReference type="ChEBI" id="CHEBI:30616"/>
    </ligand>
</feature>
<dbReference type="EC" id="2.7.4.9" evidence="1"/>
<dbReference type="EMBL" id="CP000947">
    <property type="protein sequence ID" value="ACA32163.1"/>
    <property type="molecule type" value="Genomic_DNA"/>
</dbReference>
<dbReference type="RefSeq" id="WP_012341348.1">
    <property type="nucleotide sequence ID" value="NC_010519.1"/>
</dbReference>
<dbReference type="SMR" id="B0URV9"/>
<dbReference type="STRING" id="228400.HSM_0514"/>
<dbReference type="GeneID" id="31486793"/>
<dbReference type="KEGG" id="hsm:HSM_0514"/>
<dbReference type="HOGENOM" id="CLU_049131_0_1_6"/>
<dbReference type="GO" id="GO:0005829">
    <property type="term" value="C:cytosol"/>
    <property type="evidence" value="ECO:0007669"/>
    <property type="project" value="TreeGrafter"/>
</dbReference>
<dbReference type="GO" id="GO:0005524">
    <property type="term" value="F:ATP binding"/>
    <property type="evidence" value="ECO:0007669"/>
    <property type="project" value="UniProtKB-UniRule"/>
</dbReference>
<dbReference type="GO" id="GO:0004798">
    <property type="term" value="F:dTMP kinase activity"/>
    <property type="evidence" value="ECO:0007669"/>
    <property type="project" value="UniProtKB-UniRule"/>
</dbReference>
<dbReference type="GO" id="GO:0006233">
    <property type="term" value="P:dTDP biosynthetic process"/>
    <property type="evidence" value="ECO:0007669"/>
    <property type="project" value="InterPro"/>
</dbReference>
<dbReference type="GO" id="GO:0006235">
    <property type="term" value="P:dTTP biosynthetic process"/>
    <property type="evidence" value="ECO:0007669"/>
    <property type="project" value="UniProtKB-UniRule"/>
</dbReference>
<dbReference type="GO" id="GO:0006227">
    <property type="term" value="P:dUDP biosynthetic process"/>
    <property type="evidence" value="ECO:0007669"/>
    <property type="project" value="TreeGrafter"/>
</dbReference>
<dbReference type="CDD" id="cd01672">
    <property type="entry name" value="TMPK"/>
    <property type="match status" value="1"/>
</dbReference>
<dbReference type="FunFam" id="3.40.50.300:FF:000321">
    <property type="entry name" value="Thymidylate kinase"/>
    <property type="match status" value="1"/>
</dbReference>
<dbReference type="Gene3D" id="3.40.50.300">
    <property type="entry name" value="P-loop containing nucleotide triphosphate hydrolases"/>
    <property type="match status" value="1"/>
</dbReference>
<dbReference type="HAMAP" id="MF_00165">
    <property type="entry name" value="Thymidylate_kinase"/>
    <property type="match status" value="1"/>
</dbReference>
<dbReference type="InterPro" id="IPR027417">
    <property type="entry name" value="P-loop_NTPase"/>
</dbReference>
<dbReference type="InterPro" id="IPR039430">
    <property type="entry name" value="Thymidylate_kin-like_dom"/>
</dbReference>
<dbReference type="InterPro" id="IPR018095">
    <property type="entry name" value="Thymidylate_kin_CS"/>
</dbReference>
<dbReference type="InterPro" id="IPR018094">
    <property type="entry name" value="Thymidylate_kinase"/>
</dbReference>
<dbReference type="NCBIfam" id="TIGR00041">
    <property type="entry name" value="DTMP_kinase"/>
    <property type="match status" value="1"/>
</dbReference>
<dbReference type="PANTHER" id="PTHR10344">
    <property type="entry name" value="THYMIDYLATE KINASE"/>
    <property type="match status" value="1"/>
</dbReference>
<dbReference type="PANTHER" id="PTHR10344:SF4">
    <property type="entry name" value="UMP-CMP KINASE 2, MITOCHONDRIAL"/>
    <property type="match status" value="1"/>
</dbReference>
<dbReference type="Pfam" id="PF02223">
    <property type="entry name" value="Thymidylate_kin"/>
    <property type="match status" value="1"/>
</dbReference>
<dbReference type="SUPFAM" id="SSF52540">
    <property type="entry name" value="P-loop containing nucleoside triphosphate hydrolases"/>
    <property type="match status" value="1"/>
</dbReference>
<dbReference type="PROSITE" id="PS01331">
    <property type="entry name" value="THYMIDYLATE_KINASE"/>
    <property type="match status" value="1"/>
</dbReference>
<gene>
    <name evidence="1" type="primary">tmk</name>
    <name type="ordered locus">HSM_0514</name>
</gene>
<name>KTHY_HISS2</name>
<evidence type="ECO:0000255" key="1">
    <source>
        <dbReference type="HAMAP-Rule" id="MF_00165"/>
    </source>
</evidence>
<proteinExistence type="inferred from homology"/>